<proteinExistence type="inferred from homology"/>
<dbReference type="EC" id="2.7.1.11"/>
<dbReference type="EMBL" id="L43967">
    <property type="protein sequence ID" value="AAC71434.1"/>
    <property type="molecule type" value="Genomic_DNA"/>
</dbReference>
<dbReference type="PIR" id="G64223">
    <property type="entry name" value="G64223"/>
</dbReference>
<dbReference type="RefSeq" id="WP_010869375.1">
    <property type="nucleotide sequence ID" value="NC_000908.2"/>
</dbReference>
<dbReference type="SMR" id="P47457"/>
<dbReference type="FunCoup" id="P47457">
    <property type="interactions" value="118"/>
</dbReference>
<dbReference type="STRING" id="243273.MG_215"/>
<dbReference type="GeneID" id="88282350"/>
<dbReference type="KEGG" id="mge:MG_215"/>
<dbReference type="eggNOG" id="COG0205">
    <property type="taxonomic scope" value="Bacteria"/>
</dbReference>
<dbReference type="HOGENOM" id="CLU_020655_0_1_14"/>
<dbReference type="InParanoid" id="P47457"/>
<dbReference type="OrthoDB" id="9802503at2"/>
<dbReference type="BioCyc" id="MGEN243273:G1GJ2-251-MONOMER"/>
<dbReference type="UniPathway" id="UPA00109">
    <property type="reaction ID" value="UER00182"/>
</dbReference>
<dbReference type="Proteomes" id="UP000000807">
    <property type="component" value="Chromosome"/>
</dbReference>
<dbReference type="GO" id="GO:0005737">
    <property type="term" value="C:cytoplasm"/>
    <property type="evidence" value="ECO:0007669"/>
    <property type="project" value="UniProtKB-SubCell"/>
</dbReference>
<dbReference type="GO" id="GO:0003872">
    <property type="term" value="F:6-phosphofructokinase activity"/>
    <property type="evidence" value="ECO:0007669"/>
    <property type="project" value="UniProtKB-EC"/>
</dbReference>
<dbReference type="GO" id="GO:0005524">
    <property type="term" value="F:ATP binding"/>
    <property type="evidence" value="ECO:0007669"/>
    <property type="project" value="UniProtKB-KW"/>
</dbReference>
<dbReference type="GO" id="GO:0046872">
    <property type="term" value="F:metal ion binding"/>
    <property type="evidence" value="ECO:0007669"/>
    <property type="project" value="UniProtKB-KW"/>
</dbReference>
<dbReference type="GO" id="GO:0006002">
    <property type="term" value="P:fructose 6-phosphate metabolic process"/>
    <property type="evidence" value="ECO:0007669"/>
    <property type="project" value="InterPro"/>
</dbReference>
<dbReference type="Gene3D" id="3.40.50.450">
    <property type="match status" value="1"/>
</dbReference>
<dbReference type="Gene3D" id="3.40.50.460">
    <property type="entry name" value="Phosphofructokinase domain"/>
    <property type="match status" value="1"/>
</dbReference>
<dbReference type="InterPro" id="IPR022953">
    <property type="entry name" value="ATP_PFK"/>
</dbReference>
<dbReference type="InterPro" id="IPR012003">
    <property type="entry name" value="ATP_PFK_prok-type"/>
</dbReference>
<dbReference type="InterPro" id="IPR000023">
    <property type="entry name" value="Phosphofructokinase_dom"/>
</dbReference>
<dbReference type="InterPro" id="IPR035966">
    <property type="entry name" value="PKF_sf"/>
</dbReference>
<dbReference type="NCBIfam" id="NF002872">
    <property type="entry name" value="PRK03202.1"/>
    <property type="match status" value="1"/>
</dbReference>
<dbReference type="PANTHER" id="PTHR13697:SF4">
    <property type="entry name" value="ATP-DEPENDENT 6-PHOSPHOFRUCTOKINASE"/>
    <property type="match status" value="1"/>
</dbReference>
<dbReference type="PANTHER" id="PTHR13697">
    <property type="entry name" value="PHOSPHOFRUCTOKINASE"/>
    <property type="match status" value="1"/>
</dbReference>
<dbReference type="Pfam" id="PF00365">
    <property type="entry name" value="PFK"/>
    <property type="match status" value="1"/>
</dbReference>
<dbReference type="PIRSF" id="PIRSF000532">
    <property type="entry name" value="ATP_PFK_prok"/>
    <property type="match status" value="1"/>
</dbReference>
<dbReference type="PRINTS" id="PR00476">
    <property type="entry name" value="PHFRCTKINASE"/>
</dbReference>
<dbReference type="SUPFAM" id="SSF53784">
    <property type="entry name" value="Phosphofructokinase"/>
    <property type="match status" value="1"/>
</dbReference>
<evidence type="ECO:0000250" key="1">
    <source>
        <dbReference type="UniProtKB" id="P0A796"/>
    </source>
</evidence>
<evidence type="ECO:0000305" key="2"/>
<comment type="function">
    <text evidence="1">Catalyzes the phosphorylation of D-fructose 6-phosphate to fructose 1,6-bisphosphate by ATP, the first committing step of glycolysis.</text>
</comment>
<comment type="catalytic activity">
    <reaction evidence="1">
        <text>beta-D-fructose 6-phosphate + ATP = beta-D-fructose 1,6-bisphosphate + ADP + H(+)</text>
        <dbReference type="Rhea" id="RHEA:16109"/>
        <dbReference type="ChEBI" id="CHEBI:15378"/>
        <dbReference type="ChEBI" id="CHEBI:30616"/>
        <dbReference type="ChEBI" id="CHEBI:32966"/>
        <dbReference type="ChEBI" id="CHEBI:57634"/>
        <dbReference type="ChEBI" id="CHEBI:456216"/>
        <dbReference type="EC" id="2.7.1.11"/>
    </reaction>
</comment>
<comment type="cofactor">
    <cofactor evidence="1">
        <name>Mg(2+)</name>
        <dbReference type="ChEBI" id="CHEBI:18420"/>
    </cofactor>
</comment>
<comment type="pathway">
    <text evidence="1">Carbohydrate degradation; glycolysis; D-glyceraldehyde 3-phosphate and glycerone phosphate from D-glucose: step 3/4.</text>
</comment>
<comment type="subunit">
    <text evidence="1">Homotetramer.</text>
</comment>
<comment type="subcellular location">
    <subcellularLocation>
        <location evidence="1">Cytoplasm</location>
    </subcellularLocation>
</comment>
<comment type="similarity">
    <text evidence="2">Belongs to the phosphofructokinase type A (PFKA) family.</text>
</comment>
<organism>
    <name type="scientific">Mycoplasma genitalium (strain ATCC 33530 / DSM 19775 / NCTC 10195 / G37)</name>
    <name type="common">Mycoplasmoides genitalium</name>
    <dbReference type="NCBI Taxonomy" id="243273"/>
    <lineage>
        <taxon>Bacteria</taxon>
        <taxon>Bacillati</taxon>
        <taxon>Mycoplasmatota</taxon>
        <taxon>Mycoplasmoidales</taxon>
        <taxon>Mycoplasmoidaceae</taxon>
        <taxon>Mycoplasmoides</taxon>
    </lineage>
</organism>
<keyword id="KW-0067">ATP-binding</keyword>
<keyword id="KW-0963">Cytoplasm</keyword>
<keyword id="KW-0324">Glycolysis</keyword>
<keyword id="KW-0418">Kinase</keyword>
<keyword id="KW-0460">Magnesium</keyword>
<keyword id="KW-0479">Metal-binding</keyword>
<keyword id="KW-0547">Nucleotide-binding</keyword>
<keyword id="KW-1185">Reference proteome</keyword>
<keyword id="KW-0808">Transferase</keyword>
<protein>
    <recommendedName>
        <fullName>Probable ATP-dependent 6-phosphofructokinase</fullName>
        <shortName>ATP-PFK</shortName>
        <shortName>Phosphofructokinase</shortName>
        <ecNumber>2.7.1.11</ecNumber>
    </recommendedName>
    <alternativeName>
        <fullName>Phosphohexokinase</fullName>
    </alternativeName>
</protein>
<gene>
    <name type="primary">pfkA</name>
    <name type="synonym">pfk</name>
    <name type="ordered locus">MG215</name>
</gene>
<sequence>MDKIAILTSGGDASGMNATIAYLTKYAIAKQLEVFYVKNGYYGLYHNHFITSKELDLTDFFFMGGTVIGSSRFKQFQDPSLRKQAVLNLKKRGINNLVVIGGDGSYMGAKALSELGLNCFCLPGTIDNDVNSSEFTIGFWTALEAIRVNVEAIYHTTKSHNRLAIIEVMGRDCSDLTIFGGLATNASFVVTSKNSLDLNGFEKAVRKVLQFQNYCVVLVSENIYGKNGLPSLEMVKEHFENNAIKCNLVSLGHTQRGFSPNSIELFQISLMAKHTIDLVVNNANSQVIGMKNNQAVNYDFNTAFNLPKADRTKLLNQVNTAII</sequence>
<name>PFKA_MYCGE</name>
<accession>P47457</accession>
<feature type="chain" id="PRO_0000111963" description="Probable ATP-dependent 6-phosphofructokinase">
    <location>
        <begin position="1"/>
        <end position="323"/>
    </location>
</feature>
<feature type="active site" description="Proton acceptor" evidence="1">
    <location>
        <position position="127"/>
    </location>
</feature>
<feature type="binding site" evidence="1">
    <location>
        <position position="11"/>
    </location>
    <ligand>
        <name>ATP</name>
        <dbReference type="ChEBI" id="CHEBI:30616"/>
    </ligand>
</feature>
<feature type="binding site" evidence="1">
    <location>
        <begin position="72"/>
        <end position="73"/>
    </location>
    <ligand>
        <name>ATP</name>
        <dbReference type="ChEBI" id="CHEBI:30616"/>
    </ligand>
</feature>
<feature type="binding site" evidence="1">
    <location>
        <begin position="102"/>
        <end position="105"/>
    </location>
    <ligand>
        <name>ATP</name>
        <dbReference type="ChEBI" id="CHEBI:30616"/>
    </ligand>
</feature>
<feature type="binding site" evidence="1">
    <location>
        <position position="103"/>
    </location>
    <ligand>
        <name>Mg(2+)</name>
        <dbReference type="ChEBI" id="CHEBI:18420"/>
        <note>catalytic</note>
    </ligand>
</feature>
<feature type="binding site" description="in other chain" evidence="1">
    <location>
        <begin position="125"/>
        <end position="127"/>
    </location>
    <ligand>
        <name>substrate</name>
        <note>ligand shared between dimeric partners</note>
    </ligand>
</feature>
<feature type="binding site" evidence="1">
    <location>
        <position position="162"/>
    </location>
    <ligand>
        <name>substrate</name>
        <note>ligand shared between dimeric partners</note>
    </ligand>
</feature>
<feature type="binding site" description="in other chain" evidence="1">
    <location>
        <begin position="169"/>
        <end position="171"/>
    </location>
    <ligand>
        <name>substrate</name>
        <note>ligand shared between dimeric partners</note>
    </ligand>
</feature>
<feature type="binding site" description="in other chain" evidence="1">
    <location>
        <position position="221"/>
    </location>
    <ligand>
        <name>substrate</name>
        <note>ligand shared between dimeric partners</note>
    </ligand>
</feature>
<feature type="binding site" description="in other chain" evidence="1">
    <location>
        <begin position="253"/>
        <end position="256"/>
    </location>
    <ligand>
        <name>substrate</name>
        <note>ligand shared between dimeric partners</note>
    </ligand>
</feature>
<reference key="1">
    <citation type="journal article" date="1995" name="Science">
        <title>The minimal gene complement of Mycoplasma genitalium.</title>
        <authorList>
            <person name="Fraser C.M."/>
            <person name="Gocayne J.D."/>
            <person name="White O."/>
            <person name="Adams M.D."/>
            <person name="Clayton R.A."/>
            <person name="Fleischmann R.D."/>
            <person name="Bult C.J."/>
            <person name="Kerlavage A.R."/>
            <person name="Sutton G.G."/>
            <person name="Kelley J.M."/>
            <person name="Fritchman J.L."/>
            <person name="Weidman J.F."/>
            <person name="Small K.V."/>
            <person name="Sandusky M."/>
            <person name="Fuhrmann J.L."/>
            <person name="Nguyen D.T."/>
            <person name="Utterback T.R."/>
            <person name="Saudek D.M."/>
            <person name="Phillips C.A."/>
            <person name="Merrick J.M."/>
            <person name="Tomb J.-F."/>
            <person name="Dougherty B.A."/>
            <person name="Bott K.F."/>
            <person name="Hu P.-C."/>
            <person name="Lucier T.S."/>
            <person name="Peterson S.N."/>
            <person name="Smith H.O."/>
            <person name="Hutchison C.A. III"/>
            <person name="Venter J.C."/>
        </authorList>
    </citation>
    <scope>NUCLEOTIDE SEQUENCE [LARGE SCALE GENOMIC DNA]</scope>
    <source>
        <strain>ATCC 33530 / DSM 19775 / NCTC 10195 / G37</strain>
    </source>
</reference>